<accession>Q9CNY5</accession>
<name>GALE_PASMU</name>
<proteinExistence type="inferred from homology"/>
<feature type="chain" id="PRO_0000183216" description="UDP-glucose 4-epimerase">
    <location>
        <begin position="1"/>
        <end position="338"/>
    </location>
</feature>
<feature type="active site" description="Proton acceptor" evidence="1">
    <location>
        <position position="149"/>
    </location>
</feature>
<feature type="binding site" evidence="1">
    <location>
        <begin position="11"/>
        <end position="12"/>
    </location>
    <ligand>
        <name>NAD(+)</name>
        <dbReference type="ChEBI" id="CHEBI:57540"/>
    </ligand>
</feature>
<feature type="binding site" evidence="1">
    <location>
        <begin position="31"/>
        <end position="36"/>
    </location>
    <ligand>
        <name>NAD(+)</name>
        <dbReference type="ChEBI" id="CHEBI:57540"/>
    </ligand>
</feature>
<feature type="binding site" evidence="1">
    <location>
        <begin position="58"/>
        <end position="59"/>
    </location>
    <ligand>
        <name>NAD(+)</name>
        <dbReference type="ChEBI" id="CHEBI:57540"/>
    </ligand>
</feature>
<feature type="binding site" evidence="1">
    <location>
        <begin position="80"/>
        <end position="84"/>
    </location>
    <ligand>
        <name>NAD(+)</name>
        <dbReference type="ChEBI" id="CHEBI:57540"/>
    </ligand>
</feature>
<feature type="binding site" evidence="1">
    <location>
        <position position="99"/>
    </location>
    <ligand>
        <name>NAD(+)</name>
        <dbReference type="ChEBI" id="CHEBI:57540"/>
    </ligand>
</feature>
<feature type="binding site" evidence="1">
    <location>
        <position position="124"/>
    </location>
    <ligand>
        <name>NAD(+)</name>
        <dbReference type="ChEBI" id="CHEBI:57540"/>
    </ligand>
</feature>
<feature type="binding site" evidence="1">
    <location>
        <position position="124"/>
    </location>
    <ligand>
        <name>substrate</name>
    </ligand>
</feature>
<feature type="binding site" evidence="1">
    <location>
        <position position="149"/>
    </location>
    <ligand>
        <name>NAD(+)</name>
        <dbReference type="ChEBI" id="CHEBI:57540"/>
    </ligand>
</feature>
<feature type="binding site" evidence="1">
    <location>
        <position position="149"/>
    </location>
    <ligand>
        <name>substrate</name>
    </ligand>
</feature>
<feature type="binding site" evidence="1">
    <location>
        <position position="153"/>
    </location>
    <ligand>
        <name>NAD(+)</name>
        <dbReference type="ChEBI" id="CHEBI:57540"/>
    </ligand>
</feature>
<feature type="binding site" evidence="1">
    <location>
        <position position="178"/>
    </location>
    <ligand>
        <name>NAD(+)</name>
        <dbReference type="ChEBI" id="CHEBI:57540"/>
    </ligand>
</feature>
<feature type="binding site" evidence="1">
    <location>
        <position position="179"/>
    </location>
    <ligand>
        <name>substrate</name>
    </ligand>
</feature>
<feature type="binding site" evidence="1">
    <location>
        <begin position="199"/>
        <end position="200"/>
    </location>
    <ligand>
        <name>substrate</name>
    </ligand>
</feature>
<feature type="binding site" evidence="1">
    <location>
        <begin position="216"/>
        <end position="218"/>
    </location>
    <ligand>
        <name>substrate</name>
    </ligand>
</feature>
<feature type="binding site" evidence="1">
    <location>
        <position position="231"/>
    </location>
    <ligand>
        <name>substrate</name>
    </ligand>
</feature>
<feature type="binding site" evidence="1">
    <location>
        <begin position="292"/>
        <end position="295"/>
    </location>
    <ligand>
        <name>substrate</name>
    </ligand>
</feature>
<protein>
    <recommendedName>
        <fullName>UDP-glucose 4-epimerase</fullName>
        <ecNumber>5.1.3.2</ecNumber>
    </recommendedName>
    <alternativeName>
        <fullName>Galactowaldenase</fullName>
    </alternativeName>
    <alternativeName>
        <fullName>UDP-galactose 4-epimerase</fullName>
    </alternativeName>
</protein>
<sequence>MAILVTGGAGYIGSHTVVELLNANKDVVVLDNLCNSSPKSLERVAQITGKQVKFYQGDILDTALLQKIFAENQIQSVIHFAGLKAVGESVQKPAEYYMNNVTGSLVLIQEMKKAGVWNFVFSSSATVYGDPEIIPITESCKVGGTTNPYGTSKFMVEQILKDIAKATPEFSITILRYFNPVGAHESGLIGEDPNGIPNNLLPYISQVAIGKLPQLSVFGSDYETHDGTGVRDYIHVVDLAIGHLKALDRHEGDAGLHIYNLGTGSGYSVLDMVKAFEKVNDIKIPYKLVDRRPGDIATCYSDPSLAKTELNWTAARGLEQMMKDTWHWQKKNPKGYRD</sequence>
<organism>
    <name type="scientific">Pasteurella multocida (strain Pm70)</name>
    <dbReference type="NCBI Taxonomy" id="272843"/>
    <lineage>
        <taxon>Bacteria</taxon>
        <taxon>Pseudomonadati</taxon>
        <taxon>Pseudomonadota</taxon>
        <taxon>Gammaproteobacteria</taxon>
        <taxon>Pasteurellales</taxon>
        <taxon>Pasteurellaceae</taxon>
        <taxon>Pasteurella</taxon>
    </lineage>
</organism>
<comment type="function">
    <text evidence="1">Involved in the metabolism of galactose. Catalyzes the conversion of UDP-galactose (UDP-Gal) to UDP-glucose (UDP-Glc) through a mechanism involving the transient reduction of NAD (By similarity).</text>
</comment>
<comment type="catalytic activity">
    <reaction>
        <text>UDP-alpha-D-glucose = UDP-alpha-D-galactose</text>
        <dbReference type="Rhea" id="RHEA:22168"/>
        <dbReference type="ChEBI" id="CHEBI:58885"/>
        <dbReference type="ChEBI" id="CHEBI:66914"/>
        <dbReference type="EC" id="5.1.3.2"/>
    </reaction>
</comment>
<comment type="cofactor">
    <cofactor evidence="1">
        <name>NAD(+)</name>
        <dbReference type="ChEBI" id="CHEBI:57540"/>
    </cofactor>
</comment>
<comment type="pathway">
    <text>Carbohydrate metabolism; galactose metabolism.</text>
</comment>
<comment type="subunit">
    <text evidence="1">Homodimer.</text>
</comment>
<comment type="similarity">
    <text evidence="2">Belongs to the NAD(P)-dependent epimerase/dehydratase family.</text>
</comment>
<gene>
    <name type="primary">galE</name>
    <name type="ordered locus">PM0286</name>
</gene>
<dbReference type="EC" id="5.1.3.2"/>
<dbReference type="EMBL" id="AE004439">
    <property type="protein sequence ID" value="AAK02370.1"/>
    <property type="molecule type" value="Genomic_DNA"/>
</dbReference>
<dbReference type="RefSeq" id="WP_010906564.1">
    <property type="nucleotide sequence ID" value="NC_002663.1"/>
</dbReference>
<dbReference type="SMR" id="Q9CNY5"/>
<dbReference type="STRING" id="272843.PM0286"/>
<dbReference type="EnsemblBacteria" id="AAK02370">
    <property type="protein sequence ID" value="AAK02370"/>
    <property type="gene ID" value="PM0286"/>
</dbReference>
<dbReference type="KEGG" id="pmu:PM0286"/>
<dbReference type="PATRIC" id="fig|272843.6.peg.295"/>
<dbReference type="HOGENOM" id="CLU_007383_1_10_6"/>
<dbReference type="OrthoDB" id="9803010at2"/>
<dbReference type="UniPathway" id="UPA00214"/>
<dbReference type="Proteomes" id="UP000000809">
    <property type="component" value="Chromosome"/>
</dbReference>
<dbReference type="GO" id="GO:0005829">
    <property type="term" value="C:cytosol"/>
    <property type="evidence" value="ECO:0007669"/>
    <property type="project" value="TreeGrafter"/>
</dbReference>
<dbReference type="GO" id="GO:0003978">
    <property type="term" value="F:UDP-glucose 4-epimerase activity"/>
    <property type="evidence" value="ECO:0007669"/>
    <property type="project" value="UniProtKB-EC"/>
</dbReference>
<dbReference type="GO" id="GO:0006012">
    <property type="term" value="P:galactose metabolic process"/>
    <property type="evidence" value="ECO:0007669"/>
    <property type="project" value="UniProtKB-UniPathway"/>
</dbReference>
<dbReference type="CDD" id="cd05247">
    <property type="entry name" value="UDP_G4E_1_SDR_e"/>
    <property type="match status" value="1"/>
</dbReference>
<dbReference type="Gene3D" id="3.40.50.720">
    <property type="entry name" value="NAD(P)-binding Rossmann-like Domain"/>
    <property type="match status" value="1"/>
</dbReference>
<dbReference type="Gene3D" id="3.90.25.10">
    <property type="entry name" value="UDP-galactose 4-epimerase, domain 1"/>
    <property type="match status" value="1"/>
</dbReference>
<dbReference type="InterPro" id="IPR001509">
    <property type="entry name" value="Epimerase_deHydtase"/>
</dbReference>
<dbReference type="InterPro" id="IPR036291">
    <property type="entry name" value="NAD(P)-bd_dom_sf"/>
</dbReference>
<dbReference type="InterPro" id="IPR005886">
    <property type="entry name" value="UDP_G4E"/>
</dbReference>
<dbReference type="NCBIfam" id="TIGR01179">
    <property type="entry name" value="galE"/>
    <property type="match status" value="1"/>
</dbReference>
<dbReference type="NCBIfam" id="NF007956">
    <property type="entry name" value="PRK10675.1"/>
    <property type="match status" value="1"/>
</dbReference>
<dbReference type="PANTHER" id="PTHR43725">
    <property type="entry name" value="UDP-GLUCOSE 4-EPIMERASE"/>
    <property type="match status" value="1"/>
</dbReference>
<dbReference type="PANTHER" id="PTHR43725:SF47">
    <property type="entry name" value="UDP-GLUCOSE 4-EPIMERASE"/>
    <property type="match status" value="1"/>
</dbReference>
<dbReference type="Pfam" id="PF01370">
    <property type="entry name" value="Epimerase"/>
    <property type="match status" value="1"/>
</dbReference>
<dbReference type="SUPFAM" id="SSF51735">
    <property type="entry name" value="NAD(P)-binding Rossmann-fold domains"/>
    <property type="match status" value="1"/>
</dbReference>
<evidence type="ECO:0000250" key="1"/>
<evidence type="ECO:0000305" key="2"/>
<reference key="1">
    <citation type="journal article" date="2001" name="Proc. Natl. Acad. Sci. U.S.A.">
        <title>Complete genomic sequence of Pasteurella multocida Pm70.</title>
        <authorList>
            <person name="May B.J."/>
            <person name="Zhang Q."/>
            <person name="Li L.L."/>
            <person name="Paustian M.L."/>
            <person name="Whittam T.S."/>
            <person name="Kapur V."/>
        </authorList>
    </citation>
    <scope>NUCLEOTIDE SEQUENCE [LARGE SCALE GENOMIC DNA]</scope>
    <source>
        <strain>Pm70</strain>
    </source>
</reference>
<keyword id="KW-0119">Carbohydrate metabolism</keyword>
<keyword id="KW-0299">Galactose metabolism</keyword>
<keyword id="KW-0413">Isomerase</keyword>
<keyword id="KW-0520">NAD</keyword>
<keyword id="KW-1185">Reference proteome</keyword>